<organism>
    <name type="scientific">Pseudomonas syringae pv. syringae (strain B728a)</name>
    <dbReference type="NCBI Taxonomy" id="205918"/>
    <lineage>
        <taxon>Bacteria</taxon>
        <taxon>Pseudomonadati</taxon>
        <taxon>Pseudomonadota</taxon>
        <taxon>Gammaproteobacteria</taxon>
        <taxon>Pseudomonadales</taxon>
        <taxon>Pseudomonadaceae</taxon>
        <taxon>Pseudomonas</taxon>
        <taxon>Pseudomonas syringae</taxon>
    </lineage>
</organism>
<feature type="chain" id="PRO_0000269481" description="7-methyl-GTP pyrophosphatase">
    <location>
        <begin position="1"/>
        <end position="192"/>
    </location>
</feature>
<feature type="active site" description="Proton acceptor" evidence="1">
    <location>
        <position position="69"/>
    </location>
</feature>
<feature type="site" description="Important for substrate specificity" evidence="1">
    <location>
        <position position="12"/>
    </location>
</feature>
<feature type="site" description="Important for substrate specificity" evidence="1">
    <location>
        <position position="70"/>
    </location>
</feature>
<feature type="site" description="Important for substrate specificity" evidence="1">
    <location>
        <position position="154"/>
    </location>
</feature>
<comment type="function">
    <text evidence="1">Nucleoside triphosphate pyrophosphatase that hydrolyzes 7-methyl-GTP (m(7)GTP). May have a dual role in cell division arrest and in preventing the incorporation of modified nucleotides into cellular nucleic acids.</text>
</comment>
<comment type="catalytic activity">
    <reaction evidence="1">
        <text>N(7)-methyl-GTP + H2O = N(7)-methyl-GMP + diphosphate + H(+)</text>
        <dbReference type="Rhea" id="RHEA:58744"/>
        <dbReference type="ChEBI" id="CHEBI:15377"/>
        <dbReference type="ChEBI" id="CHEBI:15378"/>
        <dbReference type="ChEBI" id="CHEBI:33019"/>
        <dbReference type="ChEBI" id="CHEBI:58285"/>
        <dbReference type="ChEBI" id="CHEBI:87133"/>
    </reaction>
</comment>
<comment type="cofactor">
    <cofactor evidence="1">
        <name>a divalent metal cation</name>
        <dbReference type="ChEBI" id="CHEBI:60240"/>
    </cofactor>
</comment>
<comment type="subcellular location">
    <subcellularLocation>
        <location evidence="1">Cytoplasm</location>
    </subcellularLocation>
</comment>
<comment type="similarity">
    <text evidence="1">Belongs to the Maf family. YceF subfamily.</text>
</comment>
<comment type="sequence caution" evidence="2">
    <conflict type="erroneous initiation">
        <sequence resource="EMBL-CDS" id="AAY36690"/>
    </conflict>
</comment>
<dbReference type="EC" id="3.6.1.-" evidence="1"/>
<dbReference type="EMBL" id="CP000075">
    <property type="protein sequence ID" value="AAY36690.1"/>
    <property type="status" value="ALT_INIT"/>
    <property type="molecule type" value="Genomic_DNA"/>
</dbReference>
<dbReference type="RefSeq" id="WP_024661285.1">
    <property type="nucleotide sequence ID" value="NC_007005.1"/>
</dbReference>
<dbReference type="RefSeq" id="YP_234728.1">
    <property type="nucleotide sequence ID" value="NC_007005.1"/>
</dbReference>
<dbReference type="SMR" id="Q4ZVY2"/>
<dbReference type="STRING" id="205918.Psyr_1642"/>
<dbReference type="KEGG" id="psb:Psyr_1642"/>
<dbReference type="PATRIC" id="fig|205918.7.peg.1679"/>
<dbReference type="eggNOG" id="COG0424">
    <property type="taxonomic scope" value="Bacteria"/>
</dbReference>
<dbReference type="HOGENOM" id="CLU_040416_1_0_6"/>
<dbReference type="OrthoDB" id="9813694at2"/>
<dbReference type="Proteomes" id="UP000000426">
    <property type="component" value="Chromosome"/>
</dbReference>
<dbReference type="GO" id="GO:0005737">
    <property type="term" value="C:cytoplasm"/>
    <property type="evidence" value="ECO:0007669"/>
    <property type="project" value="UniProtKB-SubCell"/>
</dbReference>
<dbReference type="GO" id="GO:0047429">
    <property type="term" value="F:nucleoside triphosphate diphosphatase activity"/>
    <property type="evidence" value="ECO:0007669"/>
    <property type="project" value="InterPro"/>
</dbReference>
<dbReference type="GO" id="GO:0009117">
    <property type="term" value="P:nucleotide metabolic process"/>
    <property type="evidence" value="ECO:0007669"/>
    <property type="project" value="UniProtKB-KW"/>
</dbReference>
<dbReference type="CDD" id="cd00555">
    <property type="entry name" value="Maf"/>
    <property type="match status" value="1"/>
</dbReference>
<dbReference type="FunFam" id="3.90.950.10:FF:000005">
    <property type="entry name" value="7-methyl-GTP pyrophosphatase"/>
    <property type="match status" value="1"/>
</dbReference>
<dbReference type="Gene3D" id="3.90.950.10">
    <property type="match status" value="1"/>
</dbReference>
<dbReference type="HAMAP" id="MF_00528">
    <property type="entry name" value="Maf"/>
    <property type="match status" value="1"/>
</dbReference>
<dbReference type="InterPro" id="IPR029001">
    <property type="entry name" value="ITPase-like_fam"/>
</dbReference>
<dbReference type="InterPro" id="IPR003697">
    <property type="entry name" value="Maf-like"/>
</dbReference>
<dbReference type="NCBIfam" id="TIGR00172">
    <property type="entry name" value="maf"/>
    <property type="match status" value="1"/>
</dbReference>
<dbReference type="PANTHER" id="PTHR43213:SF10">
    <property type="entry name" value="7-METHYL-GTP PYROPHOSPHATASE"/>
    <property type="match status" value="1"/>
</dbReference>
<dbReference type="PANTHER" id="PTHR43213">
    <property type="entry name" value="BIFUNCTIONAL DTTP/UTP PYROPHOSPHATASE/METHYLTRANSFERASE PROTEIN-RELATED"/>
    <property type="match status" value="1"/>
</dbReference>
<dbReference type="Pfam" id="PF02545">
    <property type="entry name" value="Maf"/>
    <property type="match status" value="1"/>
</dbReference>
<dbReference type="PIRSF" id="PIRSF006305">
    <property type="entry name" value="Maf"/>
    <property type="match status" value="1"/>
</dbReference>
<dbReference type="SUPFAM" id="SSF52972">
    <property type="entry name" value="ITPase-like"/>
    <property type="match status" value="1"/>
</dbReference>
<evidence type="ECO:0000255" key="1">
    <source>
        <dbReference type="HAMAP-Rule" id="MF_00528"/>
    </source>
</evidence>
<evidence type="ECO:0000305" key="2"/>
<keyword id="KW-0963">Cytoplasm</keyword>
<keyword id="KW-0378">Hydrolase</keyword>
<keyword id="KW-0546">Nucleotide metabolism</keyword>
<gene>
    <name type="ordered locus">Psyr_1642</name>
</gene>
<protein>
    <recommendedName>
        <fullName evidence="1">7-methyl-GTP pyrophosphatase</fullName>
        <shortName evidence="1">m(7)GTP pyrophosphatase</shortName>
        <ecNumber evidence="1">3.6.1.-</ecNumber>
    </recommendedName>
</protein>
<accession>Q4ZVY2</accession>
<name>NTPPB_PSEU2</name>
<proteinExistence type="inferred from homology"/>
<sequence length="192" mass="21119">MPSLLLASSSSYRRELLARLRLPFTCRSPDIDESRRPDEAAFDLVQRLAREKAEALTAEHHHHLIIGSDQVAVLDEQVLGKPHSFERALEQLTAASGKSVTFLTGLALFNSSTGECQVDCVPFTVHMRELDRASIERYLHAEQPYDCAGSFKAEGLGVSLFRSTEGSDATSLIGLPLIRLVDMLIKEGVSVP</sequence>
<reference key="1">
    <citation type="journal article" date="2005" name="Proc. Natl. Acad. Sci. U.S.A.">
        <title>Comparison of the complete genome sequences of Pseudomonas syringae pv. syringae B728a and pv. tomato DC3000.</title>
        <authorList>
            <person name="Feil H."/>
            <person name="Feil W.S."/>
            <person name="Chain P."/>
            <person name="Larimer F."/>
            <person name="Dibartolo G."/>
            <person name="Copeland A."/>
            <person name="Lykidis A."/>
            <person name="Trong S."/>
            <person name="Nolan M."/>
            <person name="Goltsman E."/>
            <person name="Thiel J."/>
            <person name="Malfatti S."/>
            <person name="Loper J.E."/>
            <person name="Lapidus A."/>
            <person name="Detter J.C."/>
            <person name="Land M."/>
            <person name="Richardson P.M."/>
            <person name="Kyrpides N.C."/>
            <person name="Ivanova N."/>
            <person name="Lindow S.E."/>
        </authorList>
    </citation>
    <scope>NUCLEOTIDE SEQUENCE [LARGE SCALE GENOMIC DNA]</scope>
    <source>
        <strain>B728a</strain>
    </source>
</reference>